<sequence length="810" mass="88647">MQFPESWLRTFVDPQLTTDELSHALTMAGLEVESLRPAAPPTEKIVVGRVLEVVKHPDADKLNVCQVDAGTGATLQIVCGAPNVAPGIKVPVALVGAKLPPAEEGGAPFAIKLSKLRGVESQGMLCSARELKLSEDHSGLMILPEGTPVGQDIREALNLDDTVFEIKLTPNKADCLSVFGIARETAAITGAPLAAPDIRPVLAELTETLPVKISAPDLCGRFSGRVIRGVNARAKTPHWMVERLERAGQRSVSALVDISNYVMFELGRPSHVFDLDKIHGGIDVRWGKRGESLKLLNGNTIELDETVGVISDGAQVESLAGIMGGDSTAVTLDTTNIYLEAAFWWPDSIRGRARKYNFSTDAAHRFERGVDYSTTVEHVERITQLILDICGGQAGPVDDQIVNLPQRAPVSMRASRANRIIGVEIGEDEIAQIFTRLGLAFERDGDVFRVTPPPHRFDIEIEEDLIEEVARIYGFEKIPARPPVAKSEMRATDETRRSVHAIRHALAARDYAETVNFSFVDAEWERDFAGNDNPVRLLNPIASQLSVMRTTLFGSLVGVLRHNLNRRAERVRVFEAGRVFVADPSVKAGELAVEGYAQPKRIGALAYGPVVEEQWGTATRQVDYFDVKGDLEALLAPVPARFVKAEHPALHPGRSARIEVDGHAVGWIGELHPRLMQKYELPHAPVMFEIDTDALVARALPAPSEVSKFPPVRRDIAVVVDQKVEVQALFDEMKKALADDACKFVQRVALFDEFRAKSNTSGGLSAHEKSLAFRVTLQDAAGTLQDETVDQAIQTLVDRMARVYGARLRG</sequence>
<comment type="catalytic activity">
    <reaction evidence="1">
        <text>tRNA(Phe) + L-phenylalanine + ATP = L-phenylalanyl-tRNA(Phe) + AMP + diphosphate + H(+)</text>
        <dbReference type="Rhea" id="RHEA:19413"/>
        <dbReference type="Rhea" id="RHEA-COMP:9668"/>
        <dbReference type="Rhea" id="RHEA-COMP:9699"/>
        <dbReference type="ChEBI" id="CHEBI:15378"/>
        <dbReference type="ChEBI" id="CHEBI:30616"/>
        <dbReference type="ChEBI" id="CHEBI:33019"/>
        <dbReference type="ChEBI" id="CHEBI:58095"/>
        <dbReference type="ChEBI" id="CHEBI:78442"/>
        <dbReference type="ChEBI" id="CHEBI:78531"/>
        <dbReference type="ChEBI" id="CHEBI:456215"/>
        <dbReference type="EC" id="6.1.1.20"/>
    </reaction>
</comment>
<comment type="cofactor">
    <cofactor evidence="1">
        <name>Mg(2+)</name>
        <dbReference type="ChEBI" id="CHEBI:18420"/>
    </cofactor>
    <text evidence="1">Binds 2 magnesium ions per tetramer.</text>
</comment>
<comment type="subunit">
    <text evidence="1">Tetramer of two alpha and two beta subunits.</text>
</comment>
<comment type="subcellular location">
    <subcellularLocation>
        <location evidence="1">Cytoplasm</location>
    </subcellularLocation>
</comment>
<comment type="similarity">
    <text evidence="1">Belongs to the phenylalanyl-tRNA synthetase beta subunit family. Type 1 subfamily.</text>
</comment>
<reference key="1">
    <citation type="journal article" date="2010" name="Genome Biol. Evol.">
        <title>Continuing evolution of Burkholderia mallei through genome reduction and large-scale rearrangements.</title>
        <authorList>
            <person name="Losada L."/>
            <person name="Ronning C.M."/>
            <person name="DeShazer D."/>
            <person name="Woods D."/>
            <person name="Fedorova N."/>
            <person name="Kim H.S."/>
            <person name="Shabalina S.A."/>
            <person name="Pearson T.R."/>
            <person name="Brinkac L."/>
            <person name="Tan P."/>
            <person name="Nandi T."/>
            <person name="Crabtree J."/>
            <person name="Badger J."/>
            <person name="Beckstrom-Sternberg S."/>
            <person name="Saqib M."/>
            <person name="Schutzer S.E."/>
            <person name="Keim P."/>
            <person name="Nierman W.C."/>
        </authorList>
    </citation>
    <scope>NUCLEOTIDE SEQUENCE [LARGE SCALE GENOMIC DNA]</scope>
    <source>
        <strain>1710b</strain>
    </source>
</reference>
<organism>
    <name type="scientific">Burkholderia pseudomallei (strain 1710b)</name>
    <dbReference type="NCBI Taxonomy" id="320372"/>
    <lineage>
        <taxon>Bacteria</taxon>
        <taxon>Pseudomonadati</taxon>
        <taxon>Pseudomonadota</taxon>
        <taxon>Betaproteobacteria</taxon>
        <taxon>Burkholderiales</taxon>
        <taxon>Burkholderiaceae</taxon>
        <taxon>Burkholderia</taxon>
        <taxon>pseudomallei group</taxon>
    </lineage>
</organism>
<accession>Q3JT07</accession>
<protein>
    <recommendedName>
        <fullName evidence="1">Phenylalanine--tRNA ligase beta subunit</fullName>
        <ecNumber evidence="1">6.1.1.20</ecNumber>
    </recommendedName>
    <alternativeName>
        <fullName evidence="1">Phenylalanyl-tRNA synthetase beta subunit</fullName>
        <shortName evidence="1">PheRS</shortName>
    </alternativeName>
</protein>
<dbReference type="EC" id="6.1.1.20" evidence="1"/>
<dbReference type="EMBL" id="CP000124">
    <property type="protein sequence ID" value="ABA48741.1"/>
    <property type="molecule type" value="Genomic_DNA"/>
</dbReference>
<dbReference type="RefSeq" id="WP_004526839.1">
    <property type="nucleotide sequence ID" value="NC_007434.1"/>
</dbReference>
<dbReference type="SMR" id="Q3JT07"/>
<dbReference type="EnsemblBacteria" id="ABA48741">
    <property type="protein sequence ID" value="ABA48741"/>
    <property type="gene ID" value="BURPS1710b_1896"/>
</dbReference>
<dbReference type="GeneID" id="93060051"/>
<dbReference type="KEGG" id="bpm:BURPS1710b_1896"/>
<dbReference type="HOGENOM" id="CLU_016891_0_0_4"/>
<dbReference type="Proteomes" id="UP000002700">
    <property type="component" value="Chromosome I"/>
</dbReference>
<dbReference type="GO" id="GO:0009328">
    <property type="term" value="C:phenylalanine-tRNA ligase complex"/>
    <property type="evidence" value="ECO:0007669"/>
    <property type="project" value="TreeGrafter"/>
</dbReference>
<dbReference type="GO" id="GO:0005524">
    <property type="term" value="F:ATP binding"/>
    <property type="evidence" value="ECO:0007669"/>
    <property type="project" value="UniProtKB-UniRule"/>
</dbReference>
<dbReference type="GO" id="GO:0000287">
    <property type="term" value="F:magnesium ion binding"/>
    <property type="evidence" value="ECO:0007669"/>
    <property type="project" value="UniProtKB-UniRule"/>
</dbReference>
<dbReference type="GO" id="GO:0004826">
    <property type="term" value="F:phenylalanine-tRNA ligase activity"/>
    <property type="evidence" value="ECO:0007669"/>
    <property type="project" value="UniProtKB-UniRule"/>
</dbReference>
<dbReference type="GO" id="GO:0000049">
    <property type="term" value="F:tRNA binding"/>
    <property type="evidence" value="ECO:0007669"/>
    <property type="project" value="UniProtKB-KW"/>
</dbReference>
<dbReference type="GO" id="GO:0006432">
    <property type="term" value="P:phenylalanyl-tRNA aminoacylation"/>
    <property type="evidence" value="ECO:0007669"/>
    <property type="project" value="UniProtKB-UniRule"/>
</dbReference>
<dbReference type="CDD" id="cd00769">
    <property type="entry name" value="PheRS_beta_core"/>
    <property type="match status" value="1"/>
</dbReference>
<dbReference type="CDD" id="cd02796">
    <property type="entry name" value="tRNA_bind_bactPheRS"/>
    <property type="match status" value="1"/>
</dbReference>
<dbReference type="FunFam" id="2.40.50.140:FF:000045">
    <property type="entry name" value="Phenylalanine--tRNA ligase beta subunit"/>
    <property type="match status" value="1"/>
</dbReference>
<dbReference type="FunFam" id="3.30.56.10:FF:000002">
    <property type="entry name" value="Phenylalanine--tRNA ligase beta subunit"/>
    <property type="match status" value="1"/>
</dbReference>
<dbReference type="FunFam" id="3.30.930.10:FF:000022">
    <property type="entry name" value="Phenylalanine--tRNA ligase beta subunit"/>
    <property type="match status" value="1"/>
</dbReference>
<dbReference type="Gene3D" id="3.30.56.10">
    <property type="match status" value="2"/>
</dbReference>
<dbReference type="Gene3D" id="3.30.930.10">
    <property type="entry name" value="Bira Bifunctional Protein, Domain 2"/>
    <property type="match status" value="1"/>
</dbReference>
<dbReference type="Gene3D" id="3.30.70.380">
    <property type="entry name" value="Ferrodoxin-fold anticodon-binding domain"/>
    <property type="match status" value="1"/>
</dbReference>
<dbReference type="Gene3D" id="2.40.50.140">
    <property type="entry name" value="Nucleic acid-binding proteins"/>
    <property type="match status" value="1"/>
</dbReference>
<dbReference type="Gene3D" id="3.50.40.10">
    <property type="entry name" value="Phenylalanyl-trna Synthetase, Chain B, domain 3"/>
    <property type="match status" value="1"/>
</dbReference>
<dbReference type="HAMAP" id="MF_00283">
    <property type="entry name" value="Phe_tRNA_synth_beta1"/>
    <property type="match status" value="1"/>
</dbReference>
<dbReference type="InterPro" id="IPR045864">
    <property type="entry name" value="aa-tRNA-synth_II/BPL/LPL"/>
</dbReference>
<dbReference type="InterPro" id="IPR005146">
    <property type="entry name" value="B3/B4_tRNA-bd"/>
</dbReference>
<dbReference type="InterPro" id="IPR009061">
    <property type="entry name" value="DNA-bd_dom_put_sf"/>
</dbReference>
<dbReference type="InterPro" id="IPR005121">
    <property type="entry name" value="Fdx_antiC-bd"/>
</dbReference>
<dbReference type="InterPro" id="IPR036690">
    <property type="entry name" value="Fdx_antiC-bd_sf"/>
</dbReference>
<dbReference type="InterPro" id="IPR012340">
    <property type="entry name" value="NA-bd_OB-fold"/>
</dbReference>
<dbReference type="InterPro" id="IPR045060">
    <property type="entry name" value="Phe-tRNA-ligase_IIc_bsu"/>
</dbReference>
<dbReference type="InterPro" id="IPR004532">
    <property type="entry name" value="Phe-tRNA-ligase_IIc_bsu_bact"/>
</dbReference>
<dbReference type="InterPro" id="IPR020825">
    <property type="entry name" value="Phe-tRNA_synthase-like_B3/B4"/>
</dbReference>
<dbReference type="InterPro" id="IPR041616">
    <property type="entry name" value="PheRS_beta_core"/>
</dbReference>
<dbReference type="InterPro" id="IPR002547">
    <property type="entry name" value="tRNA-bd_dom"/>
</dbReference>
<dbReference type="InterPro" id="IPR033714">
    <property type="entry name" value="tRNA_bind_bactPheRS"/>
</dbReference>
<dbReference type="InterPro" id="IPR005147">
    <property type="entry name" value="tRNA_synthase_B5-dom"/>
</dbReference>
<dbReference type="NCBIfam" id="TIGR00472">
    <property type="entry name" value="pheT_bact"/>
    <property type="match status" value="1"/>
</dbReference>
<dbReference type="NCBIfam" id="NF045760">
    <property type="entry name" value="YtpR"/>
    <property type="match status" value="1"/>
</dbReference>
<dbReference type="PANTHER" id="PTHR10947:SF0">
    <property type="entry name" value="PHENYLALANINE--TRNA LIGASE BETA SUBUNIT"/>
    <property type="match status" value="1"/>
</dbReference>
<dbReference type="PANTHER" id="PTHR10947">
    <property type="entry name" value="PHENYLALANYL-TRNA SYNTHETASE BETA CHAIN AND LEUCINE-RICH REPEAT-CONTAINING PROTEIN 47"/>
    <property type="match status" value="1"/>
</dbReference>
<dbReference type="Pfam" id="PF03483">
    <property type="entry name" value="B3_4"/>
    <property type="match status" value="1"/>
</dbReference>
<dbReference type="Pfam" id="PF03484">
    <property type="entry name" value="B5"/>
    <property type="match status" value="1"/>
</dbReference>
<dbReference type="Pfam" id="PF03147">
    <property type="entry name" value="FDX-ACB"/>
    <property type="match status" value="1"/>
</dbReference>
<dbReference type="Pfam" id="PF01588">
    <property type="entry name" value="tRNA_bind"/>
    <property type="match status" value="1"/>
</dbReference>
<dbReference type="Pfam" id="PF17759">
    <property type="entry name" value="tRNA_synthFbeta"/>
    <property type="match status" value="1"/>
</dbReference>
<dbReference type="SMART" id="SM00873">
    <property type="entry name" value="B3_4"/>
    <property type="match status" value="1"/>
</dbReference>
<dbReference type="SMART" id="SM00874">
    <property type="entry name" value="B5"/>
    <property type="match status" value="1"/>
</dbReference>
<dbReference type="SMART" id="SM00896">
    <property type="entry name" value="FDX-ACB"/>
    <property type="match status" value="1"/>
</dbReference>
<dbReference type="SUPFAM" id="SSF54991">
    <property type="entry name" value="Anticodon-binding domain of PheRS"/>
    <property type="match status" value="1"/>
</dbReference>
<dbReference type="SUPFAM" id="SSF55681">
    <property type="entry name" value="Class II aaRS and biotin synthetases"/>
    <property type="match status" value="1"/>
</dbReference>
<dbReference type="SUPFAM" id="SSF50249">
    <property type="entry name" value="Nucleic acid-binding proteins"/>
    <property type="match status" value="1"/>
</dbReference>
<dbReference type="SUPFAM" id="SSF56037">
    <property type="entry name" value="PheT/TilS domain"/>
    <property type="match status" value="1"/>
</dbReference>
<dbReference type="SUPFAM" id="SSF46955">
    <property type="entry name" value="Putative DNA-binding domain"/>
    <property type="match status" value="1"/>
</dbReference>
<dbReference type="PROSITE" id="PS51483">
    <property type="entry name" value="B5"/>
    <property type="match status" value="1"/>
</dbReference>
<dbReference type="PROSITE" id="PS51447">
    <property type="entry name" value="FDX_ACB"/>
    <property type="match status" value="1"/>
</dbReference>
<dbReference type="PROSITE" id="PS50886">
    <property type="entry name" value="TRBD"/>
    <property type="match status" value="1"/>
</dbReference>
<evidence type="ECO:0000255" key="1">
    <source>
        <dbReference type="HAMAP-Rule" id="MF_00283"/>
    </source>
</evidence>
<name>SYFB_BURP1</name>
<feature type="chain" id="PRO_0000232049" description="Phenylalanine--tRNA ligase beta subunit">
    <location>
        <begin position="1"/>
        <end position="810"/>
    </location>
</feature>
<feature type="domain" description="tRNA-binding" evidence="1">
    <location>
        <begin position="39"/>
        <end position="154"/>
    </location>
</feature>
<feature type="domain" description="B5" evidence="1">
    <location>
        <begin position="405"/>
        <end position="480"/>
    </location>
</feature>
<feature type="domain" description="FDX-ACB" evidence="1">
    <location>
        <begin position="707"/>
        <end position="809"/>
    </location>
</feature>
<feature type="binding site" evidence="1">
    <location>
        <position position="458"/>
    </location>
    <ligand>
        <name>Mg(2+)</name>
        <dbReference type="ChEBI" id="CHEBI:18420"/>
        <note>shared with alpha subunit</note>
    </ligand>
</feature>
<feature type="binding site" evidence="1">
    <location>
        <position position="464"/>
    </location>
    <ligand>
        <name>Mg(2+)</name>
        <dbReference type="ChEBI" id="CHEBI:18420"/>
        <note>shared with alpha subunit</note>
    </ligand>
</feature>
<feature type="binding site" evidence="1">
    <location>
        <position position="467"/>
    </location>
    <ligand>
        <name>Mg(2+)</name>
        <dbReference type="ChEBI" id="CHEBI:18420"/>
        <note>shared with alpha subunit</note>
    </ligand>
</feature>
<feature type="binding site" evidence="1">
    <location>
        <position position="468"/>
    </location>
    <ligand>
        <name>Mg(2+)</name>
        <dbReference type="ChEBI" id="CHEBI:18420"/>
        <note>shared with alpha subunit</note>
    </ligand>
</feature>
<proteinExistence type="inferred from homology"/>
<gene>
    <name evidence="1" type="primary">pheT</name>
    <name type="ordered locus">BURPS1710b_1896</name>
</gene>
<keyword id="KW-0030">Aminoacyl-tRNA synthetase</keyword>
<keyword id="KW-0067">ATP-binding</keyword>
<keyword id="KW-0963">Cytoplasm</keyword>
<keyword id="KW-0436">Ligase</keyword>
<keyword id="KW-0460">Magnesium</keyword>
<keyword id="KW-0479">Metal-binding</keyword>
<keyword id="KW-0547">Nucleotide-binding</keyword>
<keyword id="KW-0648">Protein biosynthesis</keyword>
<keyword id="KW-0694">RNA-binding</keyword>
<keyword id="KW-0820">tRNA-binding</keyword>